<proteinExistence type="inferred from homology"/>
<name>CYAY_PARPJ</name>
<organism>
    <name type="scientific">Paraburkholderia phytofirmans (strain DSM 17436 / LMG 22146 / PsJN)</name>
    <name type="common">Burkholderia phytofirmans</name>
    <dbReference type="NCBI Taxonomy" id="398527"/>
    <lineage>
        <taxon>Bacteria</taxon>
        <taxon>Pseudomonadati</taxon>
        <taxon>Pseudomonadota</taxon>
        <taxon>Betaproteobacteria</taxon>
        <taxon>Burkholderiales</taxon>
        <taxon>Burkholderiaceae</taxon>
        <taxon>Paraburkholderia</taxon>
    </lineage>
</organism>
<reference key="1">
    <citation type="journal article" date="2011" name="J. Bacteriol.">
        <title>Complete genome sequence of the plant growth-promoting endophyte Burkholderia phytofirmans strain PsJN.</title>
        <authorList>
            <person name="Weilharter A."/>
            <person name="Mitter B."/>
            <person name="Shin M.V."/>
            <person name="Chain P.S."/>
            <person name="Nowak J."/>
            <person name="Sessitsch A."/>
        </authorList>
    </citation>
    <scope>NUCLEOTIDE SEQUENCE [LARGE SCALE GENOMIC DNA]</scope>
    <source>
        <strain>DSM 17436 / LMG 22146 / PsJN</strain>
    </source>
</reference>
<comment type="function">
    <text evidence="1">Involved in iron-sulfur (Fe-S) cluster assembly. May act as a regulator of Fe-S biogenesis.</text>
</comment>
<comment type="similarity">
    <text evidence="1">Belongs to the frataxin family.</text>
</comment>
<dbReference type="EMBL" id="CP001052">
    <property type="protein sequence ID" value="ACD17994.1"/>
    <property type="molecule type" value="Genomic_DNA"/>
</dbReference>
<dbReference type="RefSeq" id="WP_012434552.1">
    <property type="nucleotide sequence ID" value="NC_010681.1"/>
</dbReference>
<dbReference type="SMR" id="B2T711"/>
<dbReference type="STRING" id="398527.Bphyt_3604"/>
<dbReference type="KEGG" id="bpy:Bphyt_3604"/>
<dbReference type="eggNOG" id="COG1965">
    <property type="taxonomic scope" value="Bacteria"/>
</dbReference>
<dbReference type="HOGENOM" id="CLU_080880_3_0_4"/>
<dbReference type="OrthoDB" id="285675at2"/>
<dbReference type="Proteomes" id="UP000001739">
    <property type="component" value="Chromosome 1"/>
</dbReference>
<dbReference type="GO" id="GO:0005829">
    <property type="term" value="C:cytosol"/>
    <property type="evidence" value="ECO:0007669"/>
    <property type="project" value="TreeGrafter"/>
</dbReference>
<dbReference type="GO" id="GO:0008199">
    <property type="term" value="F:ferric iron binding"/>
    <property type="evidence" value="ECO:0007669"/>
    <property type="project" value="InterPro"/>
</dbReference>
<dbReference type="GO" id="GO:0008198">
    <property type="term" value="F:ferrous iron binding"/>
    <property type="evidence" value="ECO:0007669"/>
    <property type="project" value="TreeGrafter"/>
</dbReference>
<dbReference type="GO" id="GO:0016226">
    <property type="term" value="P:iron-sulfur cluster assembly"/>
    <property type="evidence" value="ECO:0007669"/>
    <property type="project" value="UniProtKB-UniRule"/>
</dbReference>
<dbReference type="CDD" id="cd00503">
    <property type="entry name" value="Frataxin"/>
    <property type="match status" value="1"/>
</dbReference>
<dbReference type="Gene3D" id="3.30.920.10">
    <property type="entry name" value="Frataxin/CyaY"/>
    <property type="match status" value="1"/>
</dbReference>
<dbReference type="HAMAP" id="MF_00142">
    <property type="entry name" value="CyaY"/>
    <property type="match status" value="1"/>
</dbReference>
<dbReference type="InterPro" id="IPR047584">
    <property type="entry name" value="CyaY"/>
</dbReference>
<dbReference type="InterPro" id="IPR002908">
    <property type="entry name" value="Frataxin/CyaY"/>
</dbReference>
<dbReference type="InterPro" id="IPR036524">
    <property type="entry name" value="Frataxin/CyaY_sf"/>
</dbReference>
<dbReference type="InterPro" id="IPR020895">
    <property type="entry name" value="Frataxin_CS"/>
</dbReference>
<dbReference type="NCBIfam" id="TIGR03421">
    <property type="entry name" value="FeS_CyaY"/>
    <property type="match status" value="1"/>
</dbReference>
<dbReference type="PANTHER" id="PTHR16821">
    <property type="entry name" value="FRATAXIN"/>
    <property type="match status" value="1"/>
</dbReference>
<dbReference type="PANTHER" id="PTHR16821:SF2">
    <property type="entry name" value="FRATAXIN, MITOCHONDRIAL"/>
    <property type="match status" value="1"/>
</dbReference>
<dbReference type="Pfam" id="PF01491">
    <property type="entry name" value="Frataxin_Cyay"/>
    <property type="match status" value="1"/>
</dbReference>
<dbReference type="SMART" id="SM01219">
    <property type="entry name" value="Frataxin_Cyay"/>
    <property type="match status" value="1"/>
</dbReference>
<dbReference type="SUPFAM" id="SSF55387">
    <property type="entry name" value="Frataxin/Nqo15-like"/>
    <property type="match status" value="1"/>
</dbReference>
<dbReference type="PROSITE" id="PS01344">
    <property type="entry name" value="FRATAXIN_1"/>
    <property type="match status" value="1"/>
</dbReference>
<dbReference type="PROSITE" id="PS50810">
    <property type="entry name" value="FRATAXIN_2"/>
    <property type="match status" value="1"/>
</dbReference>
<feature type="chain" id="PRO_1000096240" description="Iron-sulfur cluster assembly protein CyaY">
    <location>
        <begin position="1"/>
        <end position="105"/>
    </location>
</feature>
<gene>
    <name evidence="1" type="primary">cyaY</name>
    <name type="ordered locus">Bphyt_3604</name>
</gene>
<evidence type="ECO:0000255" key="1">
    <source>
        <dbReference type="HAMAP-Rule" id="MF_00142"/>
    </source>
</evidence>
<sequence length="105" mass="11754">MSDSEYLTRAEAALAAIERALDDTDADIELERSGNVLTLEFENRTKIIVNLQPPMSEIWIAAKAGGFHFRFVDGEWRDTRSGTEFFAALSEYATQQAGEPVHFKA</sequence>
<keyword id="KW-0408">Iron</keyword>
<keyword id="KW-0479">Metal-binding</keyword>
<protein>
    <recommendedName>
        <fullName evidence="1">Iron-sulfur cluster assembly protein CyaY</fullName>
    </recommendedName>
</protein>
<accession>B2T711</accession>